<protein>
    <recommendedName>
        <fullName>Histone-like protein 18C</fullName>
    </recommendedName>
</protein>
<accession>P16909</accession>
<accession>Q86NM1</accession>
<accession>Q9VPA8</accession>
<proteinExistence type="evidence at transcript level"/>
<organism>
    <name type="scientific">Drosophila melanogaster</name>
    <name type="common">Fruit fly</name>
    <dbReference type="NCBI Taxonomy" id="7227"/>
    <lineage>
        <taxon>Eukaryota</taxon>
        <taxon>Metazoa</taxon>
        <taxon>Ecdysozoa</taxon>
        <taxon>Arthropoda</taxon>
        <taxon>Hexapoda</taxon>
        <taxon>Insecta</taxon>
        <taxon>Pterygota</taxon>
        <taxon>Neoptera</taxon>
        <taxon>Endopterygota</taxon>
        <taxon>Diptera</taxon>
        <taxon>Brachycera</taxon>
        <taxon>Muscomorpha</taxon>
        <taxon>Ephydroidea</taxon>
        <taxon>Drosophilidae</taxon>
        <taxon>Drosophila</taxon>
        <taxon>Sophophora</taxon>
    </lineage>
</organism>
<comment type="function">
    <text>Not known. Encoded in the intron of cAMP-dependent protein kinase regulatory chain type I.</text>
</comment>
<comment type="developmental stage">
    <text>In pupae and in adults.</text>
</comment>
<sequence length="215" mass="24472">MSNLKQKDSKPEVAVTKSVKTYKKSIEYVNSDASDIEEDINRAEDEYASSSGFVNFLRDFKKRYGEYYSNNEIRRAAETRWNEMSFRHRCQYSAEPLDTFHVEPNSVSSLQRSSEGEHRMHSEISGCADTFFGAGGSNSCTPRKENKCSKPRVRKSCPKPRAKTSKQRRSCGKPKPKGARPRKACPRPRKKMECGKAKAKPRCLKPKSSKPKCSM</sequence>
<dbReference type="EMBL" id="X16962">
    <property type="protein sequence ID" value="CAA34836.1"/>
    <property type="molecule type" value="Genomic_DNA"/>
</dbReference>
<dbReference type="EMBL" id="AE014296">
    <property type="protein sequence ID" value="AAF51647.1"/>
    <property type="molecule type" value="Genomic_DNA"/>
</dbReference>
<dbReference type="EMBL" id="BT004840">
    <property type="protein sequence ID" value="AAO45196.1"/>
    <property type="molecule type" value="mRNA"/>
</dbReference>
<dbReference type="RefSeq" id="NP_524188.1">
    <property type="nucleotide sequence ID" value="NM_079464.3"/>
</dbReference>
<dbReference type="BioGRID" id="65561">
    <property type="interactions" value="3"/>
</dbReference>
<dbReference type="FunCoup" id="P16909">
    <property type="interactions" value="1"/>
</dbReference>
<dbReference type="IntAct" id="P16909">
    <property type="interactions" value="2"/>
</dbReference>
<dbReference type="STRING" id="7227.FBpp0077928"/>
<dbReference type="PaxDb" id="7227-FBpp0077928"/>
<dbReference type="DNASU" id="40304"/>
<dbReference type="EnsemblMetazoa" id="FBtr0078270">
    <property type="protein sequence ID" value="FBpp0077928"/>
    <property type="gene ID" value="FBgn0086915"/>
</dbReference>
<dbReference type="GeneID" id="40304"/>
<dbReference type="KEGG" id="dme:Dmel_CG3354"/>
<dbReference type="AGR" id="FB:FBgn0086915"/>
<dbReference type="CTD" id="40304"/>
<dbReference type="FlyBase" id="FBgn0086915">
    <property type="gene designation" value="Mst77F"/>
</dbReference>
<dbReference type="VEuPathDB" id="VectorBase:FBgn0086915"/>
<dbReference type="GeneTree" id="ENSGT00540000073902"/>
<dbReference type="HOGENOM" id="CLU_1246522_0_0_1"/>
<dbReference type="InParanoid" id="P16909"/>
<dbReference type="OMA" id="GCADTFF"/>
<dbReference type="OrthoDB" id="7864170at2759"/>
<dbReference type="PhylomeDB" id="P16909"/>
<dbReference type="BioGRID-ORCS" id="40304">
    <property type="hits" value="1 hit in 1 CRISPR screen"/>
</dbReference>
<dbReference type="GenomeRNAi" id="40304"/>
<dbReference type="PRO" id="PR:P16909"/>
<dbReference type="Proteomes" id="UP000000803">
    <property type="component" value="Chromosome 3L"/>
</dbReference>
<dbReference type="Bgee" id="FBgn0086915">
    <property type="expression patterns" value="Expressed in early elongation stage spermatid (Drosophila) in testis and 60 other cell types or tissues"/>
</dbReference>
<dbReference type="ExpressionAtlas" id="P16909">
    <property type="expression patterns" value="baseline and differential"/>
</dbReference>
<dbReference type="GO" id="GO:0000785">
    <property type="term" value="C:chromatin"/>
    <property type="evidence" value="ECO:0000314"/>
    <property type="project" value="FlyBase"/>
</dbReference>
<dbReference type="GO" id="GO:0005634">
    <property type="term" value="C:nucleus"/>
    <property type="evidence" value="ECO:0000314"/>
    <property type="project" value="FlyBase"/>
</dbReference>
<dbReference type="GO" id="GO:0036126">
    <property type="term" value="C:sperm flagellum"/>
    <property type="evidence" value="ECO:0000314"/>
    <property type="project" value="FlyBase"/>
</dbReference>
<dbReference type="GO" id="GO:0035092">
    <property type="term" value="P:sperm DNA condensation"/>
    <property type="evidence" value="ECO:0000316"/>
    <property type="project" value="FlyBase"/>
</dbReference>
<keyword id="KW-1185">Reference proteome</keyword>
<name>18C_DROME</name>
<reference key="1">
    <citation type="journal article" date="1988" name="Genes Dev.">
        <title>Isolation and characterization of Drosophila cAMP-dependent protein kinase genes.</title>
        <authorList>
            <person name="Kalderon D."/>
            <person name="Rubin G.M."/>
        </authorList>
    </citation>
    <scope>NUCLEOTIDE SEQUENCE [GENOMIC DNA]</scope>
    <source>
        <strain>Canton-S</strain>
    </source>
</reference>
<reference key="2">
    <citation type="journal article" date="2000" name="Science">
        <title>The genome sequence of Drosophila melanogaster.</title>
        <authorList>
            <person name="Adams M.D."/>
            <person name="Celniker S.E."/>
            <person name="Holt R.A."/>
            <person name="Evans C.A."/>
            <person name="Gocayne J.D."/>
            <person name="Amanatides P.G."/>
            <person name="Scherer S.E."/>
            <person name="Li P.W."/>
            <person name="Hoskins R.A."/>
            <person name="Galle R.F."/>
            <person name="George R.A."/>
            <person name="Lewis S.E."/>
            <person name="Richards S."/>
            <person name="Ashburner M."/>
            <person name="Henderson S.N."/>
            <person name="Sutton G.G."/>
            <person name="Wortman J.R."/>
            <person name="Yandell M.D."/>
            <person name="Zhang Q."/>
            <person name="Chen L.X."/>
            <person name="Brandon R.C."/>
            <person name="Rogers Y.-H.C."/>
            <person name="Blazej R.G."/>
            <person name="Champe M."/>
            <person name="Pfeiffer B.D."/>
            <person name="Wan K.H."/>
            <person name="Doyle C."/>
            <person name="Baxter E.G."/>
            <person name="Helt G."/>
            <person name="Nelson C.R."/>
            <person name="Miklos G.L.G."/>
            <person name="Abril J.F."/>
            <person name="Agbayani A."/>
            <person name="An H.-J."/>
            <person name="Andrews-Pfannkoch C."/>
            <person name="Baldwin D."/>
            <person name="Ballew R.M."/>
            <person name="Basu A."/>
            <person name="Baxendale J."/>
            <person name="Bayraktaroglu L."/>
            <person name="Beasley E.M."/>
            <person name="Beeson K.Y."/>
            <person name="Benos P.V."/>
            <person name="Berman B.P."/>
            <person name="Bhandari D."/>
            <person name="Bolshakov S."/>
            <person name="Borkova D."/>
            <person name="Botchan M.R."/>
            <person name="Bouck J."/>
            <person name="Brokstein P."/>
            <person name="Brottier P."/>
            <person name="Burtis K.C."/>
            <person name="Busam D.A."/>
            <person name="Butler H."/>
            <person name="Cadieu E."/>
            <person name="Center A."/>
            <person name="Chandra I."/>
            <person name="Cherry J.M."/>
            <person name="Cawley S."/>
            <person name="Dahlke C."/>
            <person name="Davenport L.B."/>
            <person name="Davies P."/>
            <person name="de Pablos B."/>
            <person name="Delcher A."/>
            <person name="Deng Z."/>
            <person name="Mays A.D."/>
            <person name="Dew I."/>
            <person name="Dietz S.M."/>
            <person name="Dodson K."/>
            <person name="Doup L.E."/>
            <person name="Downes M."/>
            <person name="Dugan-Rocha S."/>
            <person name="Dunkov B.C."/>
            <person name="Dunn P."/>
            <person name="Durbin K.J."/>
            <person name="Evangelista C.C."/>
            <person name="Ferraz C."/>
            <person name="Ferriera S."/>
            <person name="Fleischmann W."/>
            <person name="Fosler C."/>
            <person name="Gabrielian A.E."/>
            <person name="Garg N.S."/>
            <person name="Gelbart W.M."/>
            <person name="Glasser K."/>
            <person name="Glodek A."/>
            <person name="Gong F."/>
            <person name="Gorrell J.H."/>
            <person name="Gu Z."/>
            <person name="Guan P."/>
            <person name="Harris M."/>
            <person name="Harris N.L."/>
            <person name="Harvey D.A."/>
            <person name="Heiman T.J."/>
            <person name="Hernandez J.R."/>
            <person name="Houck J."/>
            <person name="Hostin D."/>
            <person name="Houston K.A."/>
            <person name="Howland T.J."/>
            <person name="Wei M.-H."/>
            <person name="Ibegwam C."/>
            <person name="Jalali M."/>
            <person name="Kalush F."/>
            <person name="Karpen G.H."/>
            <person name="Ke Z."/>
            <person name="Kennison J.A."/>
            <person name="Ketchum K.A."/>
            <person name="Kimmel B.E."/>
            <person name="Kodira C.D."/>
            <person name="Kraft C.L."/>
            <person name="Kravitz S."/>
            <person name="Kulp D."/>
            <person name="Lai Z."/>
            <person name="Lasko P."/>
            <person name="Lei Y."/>
            <person name="Levitsky A.A."/>
            <person name="Li J.H."/>
            <person name="Li Z."/>
            <person name="Liang Y."/>
            <person name="Lin X."/>
            <person name="Liu X."/>
            <person name="Mattei B."/>
            <person name="McIntosh T.C."/>
            <person name="McLeod M.P."/>
            <person name="McPherson D."/>
            <person name="Merkulov G."/>
            <person name="Milshina N.V."/>
            <person name="Mobarry C."/>
            <person name="Morris J."/>
            <person name="Moshrefi A."/>
            <person name="Mount S.M."/>
            <person name="Moy M."/>
            <person name="Murphy B."/>
            <person name="Murphy L."/>
            <person name="Muzny D.M."/>
            <person name="Nelson D.L."/>
            <person name="Nelson D.R."/>
            <person name="Nelson K.A."/>
            <person name="Nixon K."/>
            <person name="Nusskern D.R."/>
            <person name="Pacleb J.M."/>
            <person name="Palazzolo M."/>
            <person name="Pittman G.S."/>
            <person name="Pan S."/>
            <person name="Pollard J."/>
            <person name="Puri V."/>
            <person name="Reese M.G."/>
            <person name="Reinert K."/>
            <person name="Remington K."/>
            <person name="Saunders R.D.C."/>
            <person name="Scheeler F."/>
            <person name="Shen H."/>
            <person name="Shue B.C."/>
            <person name="Siden-Kiamos I."/>
            <person name="Simpson M."/>
            <person name="Skupski M.P."/>
            <person name="Smith T.J."/>
            <person name="Spier E."/>
            <person name="Spradling A.C."/>
            <person name="Stapleton M."/>
            <person name="Strong R."/>
            <person name="Sun E."/>
            <person name="Svirskas R."/>
            <person name="Tector C."/>
            <person name="Turner R."/>
            <person name="Venter E."/>
            <person name="Wang A.H."/>
            <person name="Wang X."/>
            <person name="Wang Z.-Y."/>
            <person name="Wassarman D.A."/>
            <person name="Weinstock G.M."/>
            <person name="Weissenbach J."/>
            <person name="Williams S.M."/>
            <person name="Woodage T."/>
            <person name="Worley K.C."/>
            <person name="Wu D."/>
            <person name="Yang S."/>
            <person name="Yao Q.A."/>
            <person name="Ye J."/>
            <person name="Yeh R.-F."/>
            <person name="Zaveri J.S."/>
            <person name="Zhan M."/>
            <person name="Zhang G."/>
            <person name="Zhao Q."/>
            <person name="Zheng L."/>
            <person name="Zheng X.H."/>
            <person name="Zhong F.N."/>
            <person name="Zhong W."/>
            <person name="Zhou X."/>
            <person name="Zhu S.C."/>
            <person name="Zhu X."/>
            <person name="Smith H.O."/>
            <person name="Gibbs R.A."/>
            <person name="Myers E.W."/>
            <person name="Rubin G.M."/>
            <person name="Venter J.C."/>
        </authorList>
    </citation>
    <scope>NUCLEOTIDE SEQUENCE [LARGE SCALE GENOMIC DNA]</scope>
    <source>
        <strain>Berkeley</strain>
    </source>
</reference>
<reference key="3">
    <citation type="journal article" date="2002" name="Genome Biol.">
        <title>Annotation of the Drosophila melanogaster euchromatic genome: a systematic review.</title>
        <authorList>
            <person name="Misra S."/>
            <person name="Crosby M.A."/>
            <person name="Mungall C.J."/>
            <person name="Matthews B.B."/>
            <person name="Campbell K.S."/>
            <person name="Hradecky P."/>
            <person name="Huang Y."/>
            <person name="Kaminker J.S."/>
            <person name="Millburn G.H."/>
            <person name="Prochnik S.E."/>
            <person name="Smith C.D."/>
            <person name="Tupy J.L."/>
            <person name="Whitfield E.J."/>
            <person name="Bayraktaroglu L."/>
            <person name="Berman B.P."/>
            <person name="Bettencourt B.R."/>
            <person name="Celniker S.E."/>
            <person name="de Grey A.D.N.J."/>
            <person name="Drysdale R.A."/>
            <person name="Harris N.L."/>
            <person name="Richter J."/>
            <person name="Russo S."/>
            <person name="Schroeder A.J."/>
            <person name="Shu S.Q."/>
            <person name="Stapleton M."/>
            <person name="Yamada C."/>
            <person name="Ashburner M."/>
            <person name="Gelbart W.M."/>
            <person name="Rubin G.M."/>
            <person name="Lewis S.E."/>
        </authorList>
    </citation>
    <scope>GENOME REANNOTATION</scope>
    <source>
        <strain>Berkeley</strain>
    </source>
</reference>
<reference key="4">
    <citation type="submission" date="2003-02" db="EMBL/GenBank/DDBJ databases">
        <authorList>
            <person name="Stapleton M."/>
            <person name="Brokstein P."/>
            <person name="Hong L."/>
            <person name="Agbayani A."/>
            <person name="Carlson J.W."/>
            <person name="Champe M."/>
            <person name="Chavez C."/>
            <person name="Dorsett V."/>
            <person name="Dresnek D."/>
            <person name="Farfan D."/>
            <person name="Frise E."/>
            <person name="George R.A."/>
            <person name="Gonzalez M."/>
            <person name="Guarin H."/>
            <person name="Kronmiller B."/>
            <person name="Li P.W."/>
            <person name="Liao G."/>
            <person name="Miranda A."/>
            <person name="Mungall C.J."/>
            <person name="Nunoo J."/>
            <person name="Pacleb J.M."/>
            <person name="Paragas V."/>
            <person name="Park S."/>
            <person name="Patel S."/>
            <person name="Phouanenavong S."/>
            <person name="Wan K.H."/>
            <person name="Yu C."/>
            <person name="Lewis S.E."/>
            <person name="Rubin G.M."/>
            <person name="Celniker S.E."/>
        </authorList>
    </citation>
    <scope>NUCLEOTIDE SEQUENCE [LARGE SCALE MRNA]</scope>
    <source>
        <strain>Berkeley</strain>
        <tissue>Head</tissue>
    </source>
</reference>
<gene>
    <name type="primary">Mst77F</name>
    <name type="synonym">18c</name>
    <name type="synonym">anon-77F</name>
    <name type="ORF">CG3354</name>
</gene>
<feature type="chain" id="PRO_0000064354" description="Histone-like protein 18C">
    <location>
        <begin position="1"/>
        <end position="215"/>
    </location>
</feature>
<feature type="region of interest" description="Disordered" evidence="1">
    <location>
        <begin position="140"/>
        <end position="215"/>
    </location>
</feature>
<feature type="compositionally biased region" description="Basic residues" evidence="1">
    <location>
        <begin position="149"/>
        <end position="190"/>
    </location>
</feature>
<feature type="compositionally biased region" description="Basic residues" evidence="1">
    <location>
        <begin position="197"/>
        <end position="215"/>
    </location>
</feature>
<feature type="sequence conflict" description="In Ref. 4; AAO45196." evidence="2" ref="4">
    <original>T</original>
    <variation>N</variation>
    <location>
        <position position="130"/>
    </location>
</feature>
<evidence type="ECO:0000256" key="1">
    <source>
        <dbReference type="SAM" id="MobiDB-lite"/>
    </source>
</evidence>
<evidence type="ECO:0000305" key="2"/>